<feature type="chain" id="PRO_0000111756" description="Uncharacterized HTH-type transcriptional regulator PH0045">
    <location>
        <begin position="1"/>
        <end position="155"/>
    </location>
</feature>
<feature type="domain" description="HTH asnC-type" evidence="1">
    <location>
        <begin position="4"/>
        <end position="65"/>
    </location>
</feature>
<feature type="DNA-binding region" description="H-T-H motif" evidence="1">
    <location>
        <begin position="23"/>
        <end position="42"/>
    </location>
</feature>
<organism>
    <name type="scientific">Pyrococcus horikoshii (strain ATCC 700860 / DSM 12428 / JCM 9974 / NBRC 100139 / OT-3)</name>
    <dbReference type="NCBI Taxonomy" id="70601"/>
    <lineage>
        <taxon>Archaea</taxon>
        <taxon>Methanobacteriati</taxon>
        <taxon>Methanobacteriota</taxon>
        <taxon>Thermococci</taxon>
        <taxon>Thermococcales</taxon>
        <taxon>Thermococcaceae</taxon>
        <taxon>Pyrococcus</taxon>
    </lineage>
</organism>
<evidence type="ECO:0000255" key="1">
    <source>
        <dbReference type="PROSITE-ProRule" id="PRU00319"/>
    </source>
</evidence>
<gene>
    <name type="ordered locus">PH0045</name>
</gene>
<dbReference type="EMBL" id="BA000001">
    <property type="protein sequence ID" value="BAA29113.1"/>
    <property type="molecule type" value="Genomic_DNA"/>
</dbReference>
<dbReference type="PIR" id="B71223">
    <property type="entry name" value="B71223"/>
</dbReference>
<dbReference type="RefSeq" id="WP_010884162.1">
    <property type="nucleotide sequence ID" value="NC_000961.1"/>
</dbReference>
<dbReference type="SMR" id="O57818"/>
<dbReference type="STRING" id="70601.gene:9376952"/>
<dbReference type="EnsemblBacteria" id="BAA29113">
    <property type="protein sequence ID" value="BAA29113"/>
    <property type="gene ID" value="BAA29113"/>
</dbReference>
<dbReference type="GeneID" id="1443944"/>
<dbReference type="KEGG" id="pho:PH0045"/>
<dbReference type="eggNOG" id="arCOG01580">
    <property type="taxonomic scope" value="Archaea"/>
</dbReference>
<dbReference type="OrthoDB" id="6762at2157"/>
<dbReference type="Proteomes" id="UP000000752">
    <property type="component" value="Chromosome"/>
</dbReference>
<dbReference type="GO" id="GO:0005829">
    <property type="term" value="C:cytosol"/>
    <property type="evidence" value="ECO:0007669"/>
    <property type="project" value="TreeGrafter"/>
</dbReference>
<dbReference type="GO" id="GO:0043565">
    <property type="term" value="F:sequence-specific DNA binding"/>
    <property type="evidence" value="ECO:0007669"/>
    <property type="project" value="InterPro"/>
</dbReference>
<dbReference type="GO" id="GO:0043200">
    <property type="term" value="P:response to amino acid"/>
    <property type="evidence" value="ECO:0007669"/>
    <property type="project" value="TreeGrafter"/>
</dbReference>
<dbReference type="Gene3D" id="3.30.70.920">
    <property type="match status" value="1"/>
</dbReference>
<dbReference type="Gene3D" id="1.10.10.10">
    <property type="entry name" value="Winged helix-like DNA-binding domain superfamily/Winged helix DNA-binding domain"/>
    <property type="match status" value="1"/>
</dbReference>
<dbReference type="InterPro" id="IPR000485">
    <property type="entry name" value="AsnC-type_HTH_dom"/>
</dbReference>
<dbReference type="InterPro" id="IPR011008">
    <property type="entry name" value="Dimeric_a/b-barrel"/>
</dbReference>
<dbReference type="InterPro" id="IPR019888">
    <property type="entry name" value="Tscrpt_reg_AsnC-like"/>
</dbReference>
<dbReference type="InterPro" id="IPR019887">
    <property type="entry name" value="Tscrpt_reg_AsnC/Lrp_C"/>
</dbReference>
<dbReference type="InterPro" id="IPR019885">
    <property type="entry name" value="Tscrpt_reg_HTH_AsnC-type_CS"/>
</dbReference>
<dbReference type="InterPro" id="IPR036388">
    <property type="entry name" value="WH-like_DNA-bd_sf"/>
</dbReference>
<dbReference type="InterPro" id="IPR036390">
    <property type="entry name" value="WH_DNA-bd_sf"/>
</dbReference>
<dbReference type="PANTHER" id="PTHR30154">
    <property type="entry name" value="LEUCINE-RESPONSIVE REGULATORY PROTEIN"/>
    <property type="match status" value="1"/>
</dbReference>
<dbReference type="PANTHER" id="PTHR30154:SF50">
    <property type="entry name" value="TRANSCRIPTIONAL REGULATOR, ASNC FAMILY"/>
    <property type="match status" value="1"/>
</dbReference>
<dbReference type="Pfam" id="PF01037">
    <property type="entry name" value="AsnC_trans_reg"/>
    <property type="match status" value="1"/>
</dbReference>
<dbReference type="Pfam" id="PF13404">
    <property type="entry name" value="HTH_AsnC-type"/>
    <property type="match status" value="1"/>
</dbReference>
<dbReference type="PRINTS" id="PR00033">
    <property type="entry name" value="HTHASNC"/>
</dbReference>
<dbReference type="SMART" id="SM00344">
    <property type="entry name" value="HTH_ASNC"/>
    <property type="match status" value="1"/>
</dbReference>
<dbReference type="SUPFAM" id="SSF54909">
    <property type="entry name" value="Dimeric alpha+beta barrel"/>
    <property type="match status" value="1"/>
</dbReference>
<dbReference type="SUPFAM" id="SSF46785">
    <property type="entry name" value="Winged helix' DNA-binding domain"/>
    <property type="match status" value="1"/>
</dbReference>
<dbReference type="PROSITE" id="PS00519">
    <property type="entry name" value="HTH_ASNC_1"/>
    <property type="match status" value="1"/>
</dbReference>
<dbReference type="PROSITE" id="PS50956">
    <property type="entry name" value="HTH_ASNC_2"/>
    <property type="match status" value="1"/>
</dbReference>
<proteinExistence type="predicted"/>
<reference key="1">
    <citation type="journal article" date="1998" name="DNA Res.">
        <title>Complete sequence and gene organization of the genome of a hyper-thermophilic archaebacterium, Pyrococcus horikoshii OT3.</title>
        <authorList>
            <person name="Kawarabayasi Y."/>
            <person name="Sawada M."/>
            <person name="Horikawa H."/>
            <person name="Haikawa Y."/>
            <person name="Hino Y."/>
            <person name="Yamamoto S."/>
            <person name="Sekine M."/>
            <person name="Baba S."/>
            <person name="Kosugi H."/>
            <person name="Hosoyama A."/>
            <person name="Nagai Y."/>
            <person name="Sakai M."/>
            <person name="Ogura K."/>
            <person name="Otsuka R."/>
            <person name="Nakazawa H."/>
            <person name="Takamiya M."/>
            <person name="Ohfuku Y."/>
            <person name="Funahashi T."/>
            <person name="Tanaka T."/>
            <person name="Kudoh Y."/>
            <person name="Yamazaki J."/>
            <person name="Kushida N."/>
            <person name="Oguchi A."/>
            <person name="Aoki K."/>
            <person name="Yoshizawa T."/>
            <person name="Nakamura Y."/>
            <person name="Robb F.T."/>
            <person name="Horikoshi K."/>
            <person name="Masuchi Y."/>
            <person name="Shizuya H."/>
            <person name="Kikuchi H."/>
        </authorList>
    </citation>
    <scope>NUCLEOTIDE SEQUENCE [LARGE SCALE GENOMIC DNA]</scope>
    <source>
        <strain>ATCC 700860 / DSM 12428 / JCM 9974 / NBRC 100139 / OT-3</strain>
    </source>
</reference>
<sequence>MAGIDEIDEVIVRELRKNSRITLTELGRKVGLTASAVKNRIEKLEKLGVIKGYSAVVDPSFFGEFLTAVIEIELIDPDSPDLPRILTPILKMRNISDVYKKTGEFHLVIRGTFRDVESLNTFLKDLKRNYLRNLARRTRISIVLENFKEAGVTLK</sequence>
<protein>
    <recommendedName>
        <fullName>Uncharacterized HTH-type transcriptional regulator PH0045</fullName>
    </recommendedName>
</protein>
<name>REG1_PYRHO</name>
<accession>O57818</accession>
<keyword id="KW-0238">DNA-binding</keyword>
<keyword id="KW-0804">Transcription</keyword>
<keyword id="KW-0805">Transcription regulation</keyword>